<keyword id="KW-0067">ATP-binding</keyword>
<keyword id="KW-0143">Chaperone</keyword>
<keyword id="KW-0547">Nucleotide-binding</keyword>
<keyword id="KW-0597">Phosphoprotein</keyword>
<keyword id="KW-0346">Stress response</keyword>
<accession>B2RJ90</accession>
<accession>Q9ZAD3</accession>
<comment type="function">
    <text evidence="1">Acts as a chaperone.</text>
</comment>
<comment type="induction">
    <text evidence="1">By stress conditions e.g. heat shock.</text>
</comment>
<comment type="similarity">
    <text evidence="1">Belongs to the heat shock protein 70 family.</text>
</comment>
<gene>
    <name evidence="1" type="primary">dnaK</name>
    <name type="ordered locus">PGN_0916</name>
</gene>
<feature type="chain" id="PRO_1000119739" description="Chaperone protein DnaK">
    <location>
        <begin position="1"/>
        <end position="640"/>
    </location>
</feature>
<feature type="region of interest" description="Disordered" evidence="2">
    <location>
        <begin position="602"/>
        <end position="640"/>
    </location>
</feature>
<feature type="compositionally biased region" description="Gly residues" evidence="2">
    <location>
        <begin position="603"/>
        <end position="617"/>
    </location>
</feature>
<feature type="compositionally biased region" description="Basic and acidic residues" evidence="2">
    <location>
        <begin position="626"/>
        <end position="640"/>
    </location>
</feature>
<feature type="modified residue" description="Phosphothreonine; by autocatalysis" evidence="1">
    <location>
        <position position="197"/>
    </location>
</feature>
<feature type="sequence conflict" description="In Ref. 1; BAA35087." evidence="3" ref="1">
    <original>E</original>
    <variation>D</variation>
    <location>
        <position position="169"/>
    </location>
</feature>
<feature type="sequence conflict" description="In Ref. 1; BAA35087." evidence="3" ref="1">
    <original>TLT</original>
    <variation>RLR</variation>
    <location>
        <begin position="293"/>
        <end position="295"/>
    </location>
</feature>
<reference key="1">
    <citation type="journal article" date="1999" name="FEBS Lett.">
        <title>A novel dnaK operon from Porphyromonas gingivalis.</title>
        <authorList>
            <person name="Yoshida A."/>
            <person name="Nakano Y."/>
            <person name="Yamashita Y."/>
            <person name="Oho T."/>
            <person name="Shibata Y."/>
            <person name="Ohishi M."/>
            <person name="Koga T."/>
        </authorList>
    </citation>
    <scope>NUCLEOTIDE SEQUENCE [GENOMIC DNA]</scope>
</reference>
<reference key="2">
    <citation type="journal article" date="2008" name="DNA Res.">
        <title>Determination of the genome sequence of Porphyromonas gingivalis strain ATCC 33277 and genomic comparison with strain W83 revealed extensive genome rearrangements in P. gingivalis.</title>
        <authorList>
            <person name="Naito M."/>
            <person name="Hirakawa H."/>
            <person name="Yamashita A."/>
            <person name="Ohara N."/>
            <person name="Shoji M."/>
            <person name="Yukitake H."/>
            <person name="Nakayama K."/>
            <person name="Toh H."/>
            <person name="Yoshimura F."/>
            <person name="Kuhara S."/>
            <person name="Hattori M."/>
            <person name="Hayashi T."/>
            <person name="Nakayama K."/>
        </authorList>
    </citation>
    <scope>NUCLEOTIDE SEQUENCE [LARGE SCALE GENOMIC DNA]</scope>
    <source>
        <strain>ATCC 33277 / DSM 20709 / CIP 103683 / JCM 12257 / NCTC 11834 / 2561</strain>
    </source>
</reference>
<name>DNAK_PORG3</name>
<proteinExistence type="inferred from homology"/>
<evidence type="ECO:0000255" key="1">
    <source>
        <dbReference type="HAMAP-Rule" id="MF_00332"/>
    </source>
</evidence>
<evidence type="ECO:0000256" key="2">
    <source>
        <dbReference type="SAM" id="MobiDB-lite"/>
    </source>
</evidence>
<evidence type="ECO:0000305" key="3"/>
<dbReference type="EMBL" id="AB015879">
    <property type="protein sequence ID" value="BAA35087.1"/>
    <property type="molecule type" value="Genomic_DNA"/>
</dbReference>
<dbReference type="EMBL" id="AP009380">
    <property type="protein sequence ID" value="BAG33435.1"/>
    <property type="molecule type" value="Genomic_DNA"/>
</dbReference>
<dbReference type="RefSeq" id="WP_012457876.1">
    <property type="nucleotide sequence ID" value="NC_010729.1"/>
</dbReference>
<dbReference type="SMR" id="B2RJ90"/>
<dbReference type="GeneID" id="29256128"/>
<dbReference type="KEGG" id="pgn:PGN_0916"/>
<dbReference type="eggNOG" id="COG0443">
    <property type="taxonomic scope" value="Bacteria"/>
</dbReference>
<dbReference type="HOGENOM" id="CLU_005965_2_1_10"/>
<dbReference type="OrthoDB" id="9766019at2"/>
<dbReference type="BioCyc" id="PGIN431947:G1G2V-1011-MONOMER"/>
<dbReference type="Proteomes" id="UP000008842">
    <property type="component" value="Chromosome"/>
</dbReference>
<dbReference type="GO" id="GO:0005524">
    <property type="term" value="F:ATP binding"/>
    <property type="evidence" value="ECO:0007669"/>
    <property type="project" value="UniProtKB-UniRule"/>
</dbReference>
<dbReference type="GO" id="GO:0140662">
    <property type="term" value="F:ATP-dependent protein folding chaperone"/>
    <property type="evidence" value="ECO:0007669"/>
    <property type="project" value="InterPro"/>
</dbReference>
<dbReference type="GO" id="GO:0051082">
    <property type="term" value="F:unfolded protein binding"/>
    <property type="evidence" value="ECO:0007669"/>
    <property type="project" value="InterPro"/>
</dbReference>
<dbReference type="CDD" id="cd10234">
    <property type="entry name" value="ASKHA_NBD_HSP70_DnaK-like"/>
    <property type="match status" value="1"/>
</dbReference>
<dbReference type="FunFam" id="2.60.34.10:FF:000014">
    <property type="entry name" value="Chaperone protein DnaK HSP70"/>
    <property type="match status" value="1"/>
</dbReference>
<dbReference type="FunFam" id="3.30.420.40:FF:000020">
    <property type="entry name" value="Chaperone protein HscA homolog"/>
    <property type="match status" value="1"/>
</dbReference>
<dbReference type="FunFam" id="1.20.1270.10:FF:000001">
    <property type="entry name" value="Molecular chaperone DnaK"/>
    <property type="match status" value="1"/>
</dbReference>
<dbReference type="FunFam" id="3.30.420.40:FF:000004">
    <property type="entry name" value="Molecular chaperone DnaK"/>
    <property type="match status" value="1"/>
</dbReference>
<dbReference type="FunFam" id="3.90.640.10:FF:000003">
    <property type="entry name" value="Molecular chaperone DnaK"/>
    <property type="match status" value="1"/>
</dbReference>
<dbReference type="Gene3D" id="1.20.1270.10">
    <property type="match status" value="1"/>
</dbReference>
<dbReference type="Gene3D" id="3.30.420.40">
    <property type="match status" value="2"/>
</dbReference>
<dbReference type="Gene3D" id="3.90.640.10">
    <property type="entry name" value="Actin, Chain A, domain 4"/>
    <property type="match status" value="1"/>
</dbReference>
<dbReference type="Gene3D" id="2.60.34.10">
    <property type="entry name" value="Substrate Binding Domain Of DNAk, Chain A, domain 1"/>
    <property type="match status" value="1"/>
</dbReference>
<dbReference type="HAMAP" id="MF_00332">
    <property type="entry name" value="DnaK"/>
    <property type="match status" value="1"/>
</dbReference>
<dbReference type="InterPro" id="IPR043129">
    <property type="entry name" value="ATPase_NBD"/>
</dbReference>
<dbReference type="InterPro" id="IPR012725">
    <property type="entry name" value="Chaperone_DnaK"/>
</dbReference>
<dbReference type="InterPro" id="IPR018181">
    <property type="entry name" value="Heat_shock_70_CS"/>
</dbReference>
<dbReference type="InterPro" id="IPR029048">
    <property type="entry name" value="HSP70_C_sf"/>
</dbReference>
<dbReference type="InterPro" id="IPR029047">
    <property type="entry name" value="HSP70_peptide-bd_sf"/>
</dbReference>
<dbReference type="InterPro" id="IPR013126">
    <property type="entry name" value="Hsp_70_fam"/>
</dbReference>
<dbReference type="NCBIfam" id="NF001413">
    <property type="entry name" value="PRK00290.1"/>
    <property type="match status" value="1"/>
</dbReference>
<dbReference type="NCBIfam" id="NF003520">
    <property type="entry name" value="PRK05183.1"/>
    <property type="match status" value="1"/>
</dbReference>
<dbReference type="NCBIfam" id="TIGR02350">
    <property type="entry name" value="prok_dnaK"/>
    <property type="match status" value="1"/>
</dbReference>
<dbReference type="PANTHER" id="PTHR19375">
    <property type="entry name" value="HEAT SHOCK PROTEIN 70KDA"/>
    <property type="match status" value="1"/>
</dbReference>
<dbReference type="Pfam" id="PF00012">
    <property type="entry name" value="HSP70"/>
    <property type="match status" value="1"/>
</dbReference>
<dbReference type="PRINTS" id="PR00301">
    <property type="entry name" value="HEATSHOCK70"/>
</dbReference>
<dbReference type="SUPFAM" id="SSF53067">
    <property type="entry name" value="Actin-like ATPase domain"/>
    <property type="match status" value="2"/>
</dbReference>
<dbReference type="SUPFAM" id="SSF100920">
    <property type="entry name" value="Heat shock protein 70kD (HSP70), peptide-binding domain"/>
    <property type="match status" value="1"/>
</dbReference>
<dbReference type="PROSITE" id="PS00297">
    <property type="entry name" value="HSP70_1"/>
    <property type="match status" value="1"/>
</dbReference>
<dbReference type="PROSITE" id="PS00329">
    <property type="entry name" value="HSP70_2"/>
    <property type="match status" value="1"/>
</dbReference>
<dbReference type="PROSITE" id="PS01036">
    <property type="entry name" value="HSP70_3"/>
    <property type="match status" value="1"/>
</dbReference>
<protein>
    <recommendedName>
        <fullName evidence="1">Chaperone protein DnaK</fullName>
    </recommendedName>
    <alternativeName>
        <fullName evidence="1">HSP70</fullName>
    </alternativeName>
    <alternativeName>
        <fullName evidence="1">Heat shock 70 kDa protein</fullName>
    </alternativeName>
    <alternativeName>
        <fullName evidence="1">Heat shock protein 70</fullName>
    </alternativeName>
</protein>
<organism>
    <name type="scientific">Porphyromonas gingivalis (strain ATCC 33277 / DSM 20709 / CIP 103683 / JCM 12257 / NCTC 11834 / 2561)</name>
    <dbReference type="NCBI Taxonomy" id="431947"/>
    <lineage>
        <taxon>Bacteria</taxon>
        <taxon>Pseudomonadati</taxon>
        <taxon>Bacteroidota</taxon>
        <taxon>Bacteroidia</taxon>
        <taxon>Bacteroidales</taxon>
        <taxon>Porphyromonadaceae</taxon>
        <taxon>Porphyromonas</taxon>
    </lineage>
</organism>
<sequence>MGKIIGIDLGTTNSCVSVLEGNEPIVITNSEGKRTTPSVVAFVDGGERKVGDPAKRQAITNPTKTIYSIKRFMGETYDQVSREVERVPFKVVRGDNNTPRVDIDGRLYTPQEISAMILQKMKKTAEDYLGQEVTEAVITVPAYFNDAQRQATKEAGEIAGLKVRRIVNEPTAASLAYGLDKSNKDMKIAVFDLGGGTFDISILELGDGVFEVKSTNGDTHLGGDDFDHVIIDWLAEEFKSQEGVDLRQDPMAMQRLKEAAEKAKIELSSTSSTEINLPYIMPVNGIPKHLVMTLTRAKFEQLADRLIQACVAPCETALKDAGMSRGDIDEVILVGGSTRIPAIQEIVEKIFGKAPSKGVNPDEVVAVGAAIQGGVLTGEVKDVLLLDVTPLSLGIETMGGVMTRLIDANTTIPTKKSEIFTTAVDNQPSVEIHVLQGERSLAKDNKSIGRFNLDGIAPAPRQTPQIEVTFDIDANGILNVTAHDKATGKKQNIRIEASSGLSDDEIKRMKEEAQANAEADKKEKERIDKINQADSMIFQTEKQLKELGDKFPADKKAPIDTALDKLKEAHKAQDVAAIDTAMAELQTALTAAGEELYKNVGAAQGGAQPGPDFGGAQGPSVGDQPSDDKNVTDVDFEEVK</sequence>